<keyword id="KW-1185">Reference proteome</keyword>
<keyword id="KW-0677">Repeat</keyword>
<keyword id="KW-0708">Seed storage protein</keyword>
<keyword id="KW-0732">Signal</keyword>
<keyword id="KW-0758">Storage protein</keyword>
<comment type="function">
    <text>Zeins are major seed storage proteins.</text>
</comment>
<comment type="miscellaneous">
    <text>The alpha zeins of 19 kDa and 22 kDa account for 70% of the total zein fraction. They are encoded by a large multigene family.</text>
</comment>
<comment type="miscellaneous">
    <text evidence="1">Structurally, 22K and 19K zeins are composed of nine adjacent, topologically antiparallel helices clustered within a distorted cylinder.</text>
</comment>
<comment type="similarity">
    <text evidence="2">Belongs to the zein family.</text>
</comment>
<feature type="signal peptide">
    <location>
        <begin position="1"/>
        <end position="21"/>
    </location>
</feature>
<feature type="chain" id="PRO_0000041624" description="Zein-alpha Z4">
    <location>
        <begin position="22"/>
        <end position="267"/>
    </location>
</feature>
<name>ZEAL_MAIZE</name>
<protein>
    <recommendedName>
        <fullName>Zein-alpha Z4</fullName>
    </recommendedName>
</protein>
<evidence type="ECO:0000250" key="1">
    <source>
        <dbReference type="UniProtKB" id="P04698"/>
    </source>
</evidence>
<evidence type="ECO:0000305" key="2"/>
<dbReference type="EMBL" id="V01472">
    <property type="protein sequence ID" value="CAA24719.1"/>
    <property type="molecule type" value="Genomic_DNA"/>
</dbReference>
<dbReference type="PIR" id="S07172">
    <property type="entry name" value="S07172"/>
</dbReference>
<dbReference type="RefSeq" id="NP_001105745.1">
    <property type="nucleotide sequence ID" value="NM_001112275.2"/>
</dbReference>
<dbReference type="STRING" id="4577.P04701"/>
<dbReference type="PaxDb" id="4577-GRMZM2G404459_P01"/>
<dbReference type="EnsemblPlants" id="Zm00001eb166940_T001">
    <property type="protein sequence ID" value="Zm00001eb166940_P001"/>
    <property type="gene ID" value="Zm00001eb166940"/>
</dbReference>
<dbReference type="GeneID" id="606400"/>
<dbReference type="Gramene" id="Zm00001eb166940_T001">
    <property type="protein sequence ID" value="Zm00001eb166940_P001"/>
    <property type="gene ID" value="Zm00001eb166940"/>
</dbReference>
<dbReference type="KEGG" id="zma:606400"/>
<dbReference type="MaizeGDB" id="58096"/>
<dbReference type="HOGENOM" id="CLU_073697_0_0_1"/>
<dbReference type="InParanoid" id="P04701"/>
<dbReference type="OrthoDB" id="671632at2759"/>
<dbReference type="Proteomes" id="UP000007305">
    <property type="component" value="Chromosome 4"/>
</dbReference>
<dbReference type="ExpressionAtlas" id="P04701">
    <property type="expression patterns" value="baseline and differential"/>
</dbReference>
<dbReference type="GO" id="GO:0045735">
    <property type="term" value="F:nutrient reservoir activity"/>
    <property type="evidence" value="ECO:0007669"/>
    <property type="project" value="UniProtKB-KW"/>
</dbReference>
<dbReference type="InterPro" id="IPR002530">
    <property type="entry name" value="Zein"/>
</dbReference>
<dbReference type="InterPro" id="IPR051903">
    <property type="entry name" value="Zein-alpha"/>
</dbReference>
<dbReference type="PANTHER" id="PTHR48214">
    <property type="entry name" value="ZEIN-ALPHA PMS2"/>
    <property type="match status" value="1"/>
</dbReference>
<dbReference type="PANTHER" id="PTHR48214:SF1">
    <property type="entry name" value="ZEIN-ALPHA PMS2"/>
    <property type="match status" value="1"/>
</dbReference>
<dbReference type="Pfam" id="PF01559">
    <property type="entry name" value="Zein"/>
    <property type="match status" value="2"/>
</dbReference>
<organism>
    <name type="scientific">Zea mays</name>
    <name type="common">Maize</name>
    <dbReference type="NCBI Taxonomy" id="4577"/>
    <lineage>
        <taxon>Eukaryota</taxon>
        <taxon>Viridiplantae</taxon>
        <taxon>Streptophyta</taxon>
        <taxon>Embryophyta</taxon>
        <taxon>Tracheophyta</taxon>
        <taxon>Spermatophyta</taxon>
        <taxon>Magnoliopsida</taxon>
        <taxon>Liliopsida</taxon>
        <taxon>Poales</taxon>
        <taxon>Poaceae</taxon>
        <taxon>PACMAD clade</taxon>
        <taxon>Panicoideae</taxon>
        <taxon>Andropogonodae</taxon>
        <taxon>Andropogoneae</taxon>
        <taxon>Tripsacinae</taxon>
        <taxon>Zea</taxon>
    </lineage>
</organism>
<accession>P04701</accession>
<reference key="1">
    <citation type="journal article" date="1982" name="EMBO J.">
        <title>Primary structure of a genomic zein sequence of maize.</title>
        <authorList>
            <person name="Hu N.T."/>
            <person name="Peifer M.A."/>
            <person name="Heidecker G."/>
            <person name="Messing J."/>
            <person name="Rubenstein I."/>
        </authorList>
    </citation>
    <scope>NUCLEOTIDE SEQUENCE [GENOMIC DNA]</scope>
</reference>
<reference key="2">
    <citation type="submission" date="1999-02" db="EMBL/GenBank/DDBJ databases">
        <authorList>
            <person name="Hu N.T."/>
            <person name="Peifer M.A."/>
            <person name="Heidecker G."/>
            <person name="Messing J."/>
            <person name="Rubenstein I."/>
        </authorList>
    </citation>
    <scope>SEQUENCE REVISION TO C-TERMINUS</scope>
</reference>
<sequence>MAAKIFCLIMLLGLSASAATASIFPQCSQAPIASLLPPYLSPAMSSVCENPILLPYRIQQAIAAGILPLSPLFLQQSSALLQQLPLVHLLAQNIRAQQLQQLVLANLAAYSQQQQLPLVHLLAQNIRAQQLQQLVLANLAAYSQQQQFLPFNQLAALNSAAYLQQQQLLPFSQLAAAYPRQFLPFNQLAALNSHAYVQQQQLLPFSQLAAVSPAAFLTQQHLLPFYLHTAPNVGTLLQLQQLLPFDQLALTNPAVFYQQPIIGGALF</sequence>
<proteinExistence type="inferred from homology"/>